<proteinExistence type="inferred from homology"/>
<name>RS5_AERS4</name>
<dbReference type="EMBL" id="CP000644">
    <property type="protein sequence ID" value="ABO92011.1"/>
    <property type="molecule type" value="Genomic_DNA"/>
</dbReference>
<dbReference type="RefSeq" id="WP_005319713.1">
    <property type="nucleotide sequence ID" value="NC_009348.1"/>
</dbReference>
<dbReference type="SMR" id="A4SSY9"/>
<dbReference type="STRING" id="29491.GCA_000820065_03482"/>
<dbReference type="GeneID" id="79877783"/>
<dbReference type="KEGG" id="asa:ASA_4070"/>
<dbReference type="eggNOG" id="COG0098">
    <property type="taxonomic scope" value="Bacteria"/>
</dbReference>
<dbReference type="HOGENOM" id="CLU_065898_2_2_6"/>
<dbReference type="Proteomes" id="UP000000225">
    <property type="component" value="Chromosome"/>
</dbReference>
<dbReference type="GO" id="GO:0015935">
    <property type="term" value="C:small ribosomal subunit"/>
    <property type="evidence" value="ECO:0007669"/>
    <property type="project" value="InterPro"/>
</dbReference>
<dbReference type="GO" id="GO:0019843">
    <property type="term" value="F:rRNA binding"/>
    <property type="evidence" value="ECO:0007669"/>
    <property type="project" value="UniProtKB-UniRule"/>
</dbReference>
<dbReference type="GO" id="GO:0003735">
    <property type="term" value="F:structural constituent of ribosome"/>
    <property type="evidence" value="ECO:0007669"/>
    <property type="project" value="InterPro"/>
</dbReference>
<dbReference type="GO" id="GO:0006412">
    <property type="term" value="P:translation"/>
    <property type="evidence" value="ECO:0007669"/>
    <property type="project" value="UniProtKB-UniRule"/>
</dbReference>
<dbReference type="FunFam" id="3.30.160.20:FF:000001">
    <property type="entry name" value="30S ribosomal protein S5"/>
    <property type="match status" value="1"/>
</dbReference>
<dbReference type="FunFam" id="3.30.230.10:FF:000002">
    <property type="entry name" value="30S ribosomal protein S5"/>
    <property type="match status" value="1"/>
</dbReference>
<dbReference type="Gene3D" id="3.30.160.20">
    <property type="match status" value="1"/>
</dbReference>
<dbReference type="Gene3D" id="3.30.230.10">
    <property type="match status" value="1"/>
</dbReference>
<dbReference type="HAMAP" id="MF_01307_B">
    <property type="entry name" value="Ribosomal_uS5_B"/>
    <property type="match status" value="1"/>
</dbReference>
<dbReference type="InterPro" id="IPR020568">
    <property type="entry name" value="Ribosomal_Su5_D2-typ_SF"/>
</dbReference>
<dbReference type="InterPro" id="IPR000851">
    <property type="entry name" value="Ribosomal_uS5"/>
</dbReference>
<dbReference type="InterPro" id="IPR005712">
    <property type="entry name" value="Ribosomal_uS5_bac-type"/>
</dbReference>
<dbReference type="InterPro" id="IPR005324">
    <property type="entry name" value="Ribosomal_uS5_C"/>
</dbReference>
<dbReference type="InterPro" id="IPR013810">
    <property type="entry name" value="Ribosomal_uS5_N"/>
</dbReference>
<dbReference type="InterPro" id="IPR018192">
    <property type="entry name" value="Ribosomal_uS5_N_CS"/>
</dbReference>
<dbReference type="InterPro" id="IPR014721">
    <property type="entry name" value="Ribsml_uS5_D2-typ_fold_subgr"/>
</dbReference>
<dbReference type="NCBIfam" id="TIGR01021">
    <property type="entry name" value="rpsE_bact"/>
    <property type="match status" value="1"/>
</dbReference>
<dbReference type="PANTHER" id="PTHR48277">
    <property type="entry name" value="MITOCHONDRIAL RIBOSOMAL PROTEIN S5"/>
    <property type="match status" value="1"/>
</dbReference>
<dbReference type="PANTHER" id="PTHR48277:SF1">
    <property type="entry name" value="MITOCHONDRIAL RIBOSOMAL PROTEIN S5"/>
    <property type="match status" value="1"/>
</dbReference>
<dbReference type="Pfam" id="PF00333">
    <property type="entry name" value="Ribosomal_S5"/>
    <property type="match status" value="1"/>
</dbReference>
<dbReference type="Pfam" id="PF03719">
    <property type="entry name" value="Ribosomal_S5_C"/>
    <property type="match status" value="1"/>
</dbReference>
<dbReference type="SUPFAM" id="SSF54768">
    <property type="entry name" value="dsRNA-binding domain-like"/>
    <property type="match status" value="1"/>
</dbReference>
<dbReference type="SUPFAM" id="SSF54211">
    <property type="entry name" value="Ribosomal protein S5 domain 2-like"/>
    <property type="match status" value="1"/>
</dbReference>
<dbReference type="PROSITE" id="PS00585">
    <property type="entry name" value="RIBOSOMAL_S5"/>
    <property type="match status" value="1"/>
</dbReference>
<dbReference type="PROSITE" id="PS50881">
    <property type="entry name" value="S5_DSRBD"/>
    <property type="match status" value="1"/>
</dbReference>
<reference key="1">
    <citation type="journal article" date="2008" name="BMC Genomics">
        <title>The genome of Aeromonas salmonicida subsp. salmonicida A449: insights into the evolution of a fish pathogen.</title>
        <authorList>
            <person name="Reith M.E."/>
            <person name="Singh R.K."/>
            <person name="Curtis B."/>
            <person name="Boyd J.M."/>
            <person name="Bouevitch A."/>
            <person name="Kimball J."/>
            <person name="Munholland J."/>
            <person name="Murphy C."/>
            <person name="Sarty D."/>
            <person name="Williams J."/>
            <person name="Nash J.H."/>
            <person name="Johnson S.C."/>
            <person name="Brown L.L."/>
        </authorList>
    </citation>
    <scope>NUCLEOTIDE SEQUENCE [LARGE SCALE GENOMIC DNA]</scope>
    <source>
        <strain>A449</strain>
    </source>
</reference>
<gene>
    <name evidence="1" type="primary">rpsE</name>
    <name type="ordered locus">ASA_4070</name>
</gene>
<evidence type="ECO:0000255" key="1">
    <source>
        <dbReference type="HAMAP-Rule" id="MF_01307"/>
    </source>
</evidence>
<evidence type="ECO:0000305" key="2"/>
<sequence>MAKVESQAGELQEKLIAVNRVSKTVKGGRIMSFTALTVVGDGNGRVGYGYGKAREVPAAIQKAMEQAKRNLSKVELNNGTLHHPVRGVHSGSSVFMKPASQGTGIIAGGAMRAVLEVAGIHNVLAKTYGSTNPINVVRATVDALVQGQSPAQIAAKRGLRVEEILG</sequence>
<comment type="function">
    <text evidence="1">With S4 and S12 plays an important role in translational accuracy.</text>
</comment>
<comment type="function">
    <text evidence="1">Located at the back of the 30S subunit body where it stabilizes the conformation of the head with respect to the body.</text>
</comment>
<comment type="subunit">
    <text evidence="1">Part of the 30S ribosomal subunit. Contacts proteins S4 and S8.</text>
</comment>
<comment type="domain">
    <text>The N-terminal domain interacts with the head of the 30S subunit; the C-terminal domain interacts with the body and contacts protein S4. The interaction surface between S4 and S5 is involved in control of translational fidelity.</text>
</comment>
<comment type="similarity">
    <text evidence="1">Belongs to the universal ribosomal protein uS5 family.</text>
</comment>
<organism>
    <name type="scientific">Aeromonas salmonicida (strain A449)</name>
    <dbReference type="NCBI Taxonomy" id="382245"/>
    <lineage>
        <taxon>Bacteria</taxon>
        <taxon>Pseudomonadati</taxon>
        <taxon>Pseudomonadota</taxon>
        <taxon>Gammaproteobacteria</taxon>
        <taxon>Aeromonadales</taxon>
        <taxon>Aeromonadaceae</taxon>
        <taxon>Aeromonas</taxon>
    </lineage>
</organism>
<feature type="chain" id="PRO_0000323057" description="Small ribosomal subunit protein uS5">
    <location>
        <begin position="1"/>
        <end position="166"/>
    </location>
</feature>
<feature type="domain" description="S5 DRBM" evidence="1">
    <location>
        <begin position="11"/>
        <end position="74"/>
    </location>
</feature>
<accession>A4SSY9</accession>
<protein>
    <recommendedName>
        <fullName evidence="1">Small ribosomal subunit protein uS5</fullName>
    </recommendedName>
    <alternativeName>
        <fullName evidence="2">30S ribosomal protein S5</fullName>
    </alternativeName>
</protein>
<keyword id="KW-0687">Ribonucleoprotein</keyword>
<keyword id="KW-0689">Ribosomal protein</keyword>
<keyword id="KW-0694">RNA-binding</keyword>
<keyword id="KW-0699">rRNA-binding</keyword>